<protein>
    <recommendedName>
        <fullName evidence="1">WD repeat-containing protein 91</fullName>
    </recommendedName>
</protein>
<dbReference type="EMBL" id="BC122936">
    <property type="protein sequence ID" value="AAI22937.1"/>
    <property type="molecule type" value="mRNA"/>
</dbReference>
<dbReference type="RefSeq" id="NP_001072579.1">
    <property type="nucleotide sequence ID" value="NM_001079111.1"/>
</dbReference>
<dbReference type="RefSeq" id="XP_031753931.1">
    <property type="nucleotide sequence ID" value="XM_031898071.1"/>
</dbReference>
<dbReference type="SMR" id="Q05B30"/>
<dbReference type="FunCoup" id="Q05B30">
    <property type="interactions" value="810"/>
</dbReference>
<dbReference type="STRING" id="8364.ENSXETP00000047000"/>
<dbReference type="PaxDb" id="8364-ENSXETP00000057530"/>
<dbReference type="DNASU" id="780034"/>
<dbReference type="GeneID" id="780034"/>
<dbReference type="KEGG" id="xtr:780034"/>
<dbReference type="AGR" id="Xenbase:XB-GENE-969792"/>
<dbReference type="CTD" id="29062"/>
<dbReference type="Xenbase" id="XB-GENE-969792">
    <property type="gene designation" value="wdr91"/>
</dbReference>
<dbReference type="eggNOG" id="KOG1333">
    <property type="taxonomic scope" value="Eukaryota"/>
</dbReference>
<dbReference type="InParanoid" id="Q05B30"/>
<dbReference type="OMA" id="KMYLVNA"/>
<dbReference type="OrthoDB" id="193023at2759"/>
<dbReference type="Proteomes" id="UP000008143">
    <property type="component" value="Chromosome 3"/>
</dbReference>
<dbReference type="Bgee" id="ENSXETG00000020237">
    <property type="expression patterns" value="Expressed in blastula and 13 other cell types or tissues"/>
</dbReference>
<dbReference type="GO" id="GO:0005829">
    <property type="term" value="C:cytosol"/>
    <property type="evidence" value="ECO:0000250"/>
    <property type="project" value="UniProtKB"/>
</dbReference>
<dbReference type="GO" id="GO:0031901">
    <property type="term" value="C:early endosome membrane"/>
    <property type="evidence" value="ECO:0000250"/>
    <property type="project" value="UniProtKB"/>
</dbReference>
<dbReference type="GO" id="GO:0010008">
    <property type="term" value="C:endosome membrane"/>
    <property type="evidence" value="ECO:0000250"/>
    <property type="project" value="UniProtKB"/>
</dbReference>
<dbReference type="GO" id="GO:0031902">
    <property type="term" value="C:late endosome membrane"/>
    <property type="evidence" value="ECO:0000250"/>
    <property type="project" value="UniProtKB"/>
</dbReference>
<dbReference type="GO" id="GO:0141039">
    <property type="term" value="F:phosphatidylinositol 3-kinase inhibitor activity"/>
    <property type="evidence" value="ECO:0000250"/>
    <property type="project" value="UniProtKB"/>
</dbReference>
<dbReference type="GO" id="GO:0045022">
    <property type="term" value="P:early endosome to late endosome transport"/>
    <property type="evidence" value="ECO:0000250"/>
    <property type="project" value="UniProtKB"/>
</dbReference>
<dbReference type="GO" id="GO:0051898">
    <property type="term" value="P:negative regulation of phosphatidylinositol 3-kinase/protein kinase B signal transduction"/>
    <property type="evidence" value="ECO:0007669"/>
    <property type="project" value="InterPro"/>
</dbReference>
<dbReference type="FunFam" id="2.130.10.10:FF:000276">
    <property type="entry name" value="WD repeat-containing protein 91"/>
    <property type="match status" value="1"/>
</dbReference>
<dbReference type="FunFam" id="2.130.10.10:FF:001230">
    <property type="entry name" value="WD repeat-containing protein 91"/>
    <property type="match status" value="1"/>
</dbReference>
<dbReference type="Gene3D" id="2.130.10.10">
    <property type="entry name" value="YVTN repeat-like/Quinoprotein amine dehydrogenase"/>
    <property type="match status" value="3"/>
</dbReference>
<dbReference type="InterPro" id="IPR056327">
    <property type="entry name" value="ARMC9_CTLH-like_dom"/>
</dbReference>
<dbReference type="InterPro" id="IPR015943">
    <property type="entry name" value="WD40/YVTN_repeat-like_dom_sf"/>
</dbReference>
<dbReference type="InterPro" id="IPR036322">
    <property type="entry name" value="WD40_repeat_dom_sf"/>
</dbReference>
<dbReference type="InterPro" id="IPR001680">
    <property type="entry name" value="WD40_rpt"/>
</dbReference>
<dbReference type="InterPro" id="IPR039724">
    <property type="entry name" value="WDR91"/>
</dbReference>
<dbReference type="PANTHER" id="PTHR13083">
    <property type="entry name" value="WD REPEAT-CONTAINING PROTEIN 91"/>
    <property type="match status" value="1"/>
</dbReference>
<dbReference type="PANTHER" id="PTHR13083:SF3">
    <property type="entry name" value="WD REPEAT-CONTAINING PROTEIN 91"/>
    <property type="match status" value="1"/>
</dbReference>
<dbReference type="Pfam" id="PF23138">
    <property type="entry name" value="CTLH_Armc9"/>
    <property type="match status" value="1"/>
</dbReference>
<dbReference type="Pfam" id="PF00400">
    <property type="entry name" value="WD40"/>
    <property type="match status" value="3"/>
</dbReference>
<dbReference type="SMART" id="SM00320">
    <property type="entry name" value="WD40"/>
    <property type="match status" value="5"/>
</dbReference>
<dbReference type="SUPFAM" id="SSF50978">
    <property type="entry name" value="WD40 repeat-like"/>
    <property type="match status" value="1"/>
</dbReference>
<dbReference type="PROSITE" id="PS50082">
    <property type="entry name" value="WD_REPEATS_2"/>
    <property type="match status" value="2"/>
</dbReference>
<dbReference type="PROSITE" id="PS50294">
    <property type="entry name" value="WD_REPEATS_REGION"/>
    <property type="match status" value="2"/>
</dbReference>
<reference key="1">
    <citation type="submission" date="2006-09" db="EMBL/GenBank/DDBJ databases">
        <authorList>
            <consortium name="NIH - Xenopus Gene Collection (XGC) project"/>
        </authorList>
    </citation>
    <scope>NUCLEOTIDE SEQUENCE [LARGE SCALE MRNA]</scope>
    <source>
        <tissue>Testis</tissue>
    </source>
</reference>
<proteinExistence type="evidence at transcript level"/>
<comment type="function">
    <text evidence="1">Functions as a negative regulator of the PI3 kinase/PI3K activity associated with endosomal membranes. By modifying the phosphatidylinositol 3-phosphate/PtdInsP3 content of endosomal membranes may regulate endosome fusion, recycling, sorting and early to late endosome transport.</text>
</comment>
<comment type="subcellular location">
    <subcellularLocation>
        <location evidence="1">Early endosome membrane</location>
        <topology evidence="1">Peripheral membrane protein</topology>
    </subcellularLocation>
    <subcellularLocation>
        <location evidence="1">Late endosome membrane</location>
    </subcellularLocation>
</comment>
<comment type="similarity">
    <text evidence="4">Belongs to the WD repeat WDR91 family.</text>
</comment>
<gene>
    <name evidence="1" type="primary">wdr91</name>
</gene>
<sequence length="751" mass="83760">MTSAVELTDDLVKEYLTFRGFTNTLKYFEVDIKADKDKGFRVDRIVEQLLQFVQSYDLNGLVEYWAYLERRLFSRLEDVYRPTIHKLKTSLFRYYLVYTIQSSRTDKAHEFFQKQATELQNQAEWKEWFALPFLPTPDSNRTFSTYFSRQWADTFTVSLHNFLSVLFQCMPVPKILTFQSDYQKIACLQEENEIMRQKLFALQAETYRLRKDGPSEPLVLHKLPHYVSNMDRLGDSELGSNIMSSHSNTNMNTPSQRTSGFLSSLLAQNKKPPPPKSTLPSVSSPTQSGGSVPLKKEVAVSQAQKAKELVGGTKEVRSSPNILGVPGTESSMVQQRHKRQQERKELLSKTASQVSTEKKAENSDADPDLRSDTQNDTVDAVTRGSGASGARKEEKPAQPFIVLSQDEYAEHHSSIMHCRVDCSGRRVASLDVDGVIKIWSLDGIMQTKASAISKSALLSLEWATKRDRLLLLGSEVGTVRLYDTEAKKNLCEIGIVEDMPRILSLACSPSGASFVCSAAAATSPSQTDPTYYSYGESGNNQVPGKLLLWDTKTMKQQLQFSLEPVPIAVNCTAFNHNGNLLVTGAADGFIRLFDMQQHQCALSWKAHMGEVYSVDFSYDENAVYSIGEDGKFIQWDIHKSGQKVSEYSLPSDATGPFMLSGYSGYKQVQFPRGRLFAFDSEGKYMLTCSSTGGVIYKLNSDGSTLENCLSLGGHRAPVVTVDWSTAVECGTCLTASMDGKIKLTTLLAQKS</sequence>
<keyword id="KW-0175">Coiled coil</keyword>
<keyword id="KW-0967">Endosome</keyword>
<keyword id="KW-0472">Membrane</keyword>
<keyword id="KW-1185">Reference proteome</keyword>
<keyword id="KW-0677">Repeat</keyword>
<keyword id="KW-0853">WD repeat</keyword>
<feature type="chain" id="PRO_0000295751" description="WD repeat-containing protein 91">
    <location>
        <begin position="1"/>
        <end position="751"/>
    </location>
</feature>
<feature type="repeat" description="WD 1">
    <location>
        <begin position="410"/>
        <end position="449"/>
    </location>
</feature>
<feature type="repeat" description="WD 2">
    <location>
        <begin position="452"/>
        <end position="492"/>
    </location>
</feature>
<feature type="repeat" description="WD 3">
    <location>
        <begin position="517"/>
        <end position="559"/>
    </location>
</feature>
<feature type="repeat" description="WD 4">
    <location>
        <begin position="564"/>
        <end position="603"/>
    </location>
</feature>
<feature type="repeat" description="WD 5">
    <location>
        <begin position="606"/>
        <end position="645"/>
    </location>
</feature>
<feature type="repeat" description="WD 6">
    <location>
        <begin position="668"/>
        <end position="706"/>
    </location>
</feature>
<feature type="repeat" description="WD 7">
    <location>
        <begin position="713"/>
        <end position="751"/>
    </location>
</feature>
<feature type="region of interest" description="Disordered" evidence="3">
    <location>
        <begin position="237"/>
        <end position="398"/>
    </location>
</feature>
<feature type="coiled-coil region" evidence="2">
    <location>
        <begin position="183"/>
        <end position="205"/>
    </location>
</feature>
<feature type="compositionally biased region" description="Polar residues" evidence="3">
    <location>
        <begin position="238"/>
        <end position="267"/>
    </location>
</feature>
<feature type="compositionally biased region" description="Basic and acidic residues" evidence="3">
    <location>
        <begin position="356"/>
        <end position="373"/>
    </location>
</feature>
<evidence type="ECO:0000250" key="1">
    <source>
        <dbReference type="UniProtKB" id="A4D1P6"/>
    </source>
</evidence>
<evidence type="ECO:0000255" key="2"/>
<evidence type="ECO:0000256" key="3">
    <source>
        <dbReference type="SAM" id="MobiDB-lite"/>
    </source>
</evidence>
<evidence type="ECO:0000305" key="4"/>
<organism>
    <name type="scientific">Xenopus tropicalis</name>
    <name type="common">Western clawed frog</name>
    <name type="synonym">Silurana tropicalis</name>
    <dbReference type="NCBI Taxonomy" id="8364"/>
    <lineage>
        <taxon>Eukaryota</taxon>
        <taxon>Metazoa</taxon>
        <taxon>Chordata</taxon>
        <taxon>Craniata</taxon>
        <taxon>Vertebrata</taxon>
        <taxon>Euteleostomi</taxon>
        <taxon>Amphibia</taxon>
        <taxon>Batrachia</taxon>
        <taxon>Anura</taxon>
        <taxon>Pipoidea</taxon>
        <taxon>Pipidae</taxon>
        <taxon>Xenopodinae</taxon>
        <taxon>Xenopus</taxon>
        <taxon>Silurana</taxon>
    </lineage>
</organism>
<name>WDR91_XENTR</name>
<accession>Q05B30</accession>